<organism>
    <name type="scientific">Homo sapiens</name>
    <name type="common">Human</name>
    <dbReference type="NCBI Taxonomy" id="9606"/>
    <lineage>
        <taxon>Eukaryota</taxon>
        <taxon>Metazoa</taxon>
        <taxon>Chordata</taxon>
        <taxon>Craniata</taxon>
        <taxon>Vertebrata</taxon>
        <taxon>Euteleostomi</taxon>
        <taxon>Mammalia</taxon>
        <taxon>Eutheria</taxon>
        <taxon>Euarchontoglires</taxon>
        <taxon>Primates</taxon>
        <taxon>Haplorrhini</taxon>
        <taxon>Catarrhini</taxon>
        <taxon>Hominidae</taxon>
        <taxon>Homo</taxon>
    </lineage>
</organism>
<keyword id="KW-0002">3D-structure</keyword>
<keyword id="KW-0328">Glycosyltransferase</keyword>
<keyword id="KW-1267">Proteomics identification</keyword>
<keyword id="KW-0662">Pyridine nucleotide biosynthesis</keyword>
<keyword id="KW-1185">Reference proteome</keyword>
<keyword id="KW-0808">Transferase</keyword>
<accession>Q15274</accession>
<accession>Q53XW7</accession>
<accession>Q96G22</accession>
<accession>Q9BSG6</accession>
<comment type="function">
    <text evidence="2 3 5">Involved in the catabolism of quinolinic acid (QA).</text>
</comment>
<comment type="catalytic activity">
    <reaction evidence="2 3 5">
        <text>nicotinate beta-D-ribonucleotide + CO2 + diphosphate = quinolinate + 5-phospho-alpha-D-ribose 1-diphosphate + 2 H(+)</text>
        <dbReference type="Rhea" id="RHEA:12733"/>
        <dbReference type="ChEBI" id="CHEBI:15378"/>
        <dbReference type="ChEBI" id="CHEBI:16526"/>
        <dbReference type="ChEBI" id="CHEBI:29959"/>
        <dbReference type="ChEBI" id="CHEBI:33019"/>
        <dbReference type="ChEBI" id="CHEBI:57502"/>
        <dbReference type="ChEBI" id="CHEBI:58017"/>
        <dbReference type="EC" id="2.4.2.19"/>
    </reaction>
</comment>
<comment type="activity regulation">
    <text evidence="2 3">Activity toward QA is slightly repressed by phosphoribosylpyrophosphate (PRPP) in both a competitive and a non-competitive manner (PubMed:17868694). Competitively inhibited by phthalic acid (PHT) (PubMed:24038671).</text>
</comment>
<comment type="biophysicochemical properties">
    <kinetics>
        <KM evidence="2">21 uM for QA (at 0.1 mM PRPP)</KM>
        <KM evidence="2">23 uM for QA (at 0.3 mM PRPP)</KM>
        <Vmax evidence="2">1.2 uM/min/mg enzyme (at 0.3 mM QA and 0.1 mM PRPP)</Vmax>
        <Vmax evidence="2">0.93 uM/min/mg enzyme (at 0.3 mM QA and 0.3 mM PRPP)</Vmax>
    </kinetics>
</comment>
<comment type="pathway">
    <text evidence="2 3 5">Cofactor biosynthesis; NAD(+) biosynthesis; nicotinate D-ribonucleotide from quinolinate: step 1/1.</text>
</comment>
<comment type="subunit">
    <text evidence="2 3 4">Hexamer formed by 3 homodimers.</text>
</comment>
<comment type="interaction">
    <interactant intactId="EBI-739851">
        <id>Q15274</id>
    </interactant>
    <interactant intactId="EBI-10173507">
        <id>Q6UY14-3</id>
        <label>ADAMTSL4</label>
    </interactant>
    <organismsDiffer>false</organismsDiffer>
    <experiments>3</experiments>
</comment>
<comment type="interaction">
    <interactant intactId="EBI-739851">
        <id>Q15274</id>
    </interactant>
    <interactant intactId="EBI-11959885">
        <id>Q07627</id>
        <label>KRTAP1-1</label>
    </interactant>
    <organismsDiffer>false</organismsDiffer>
    <experiments>3</experiments>
</comment>
<comment type="interaction">
    <interactant intactId="EBI-739851">
        <id>Q15274</id>
    </interactant>
    <interactant intactId="EBI-10171774">
        <id>P60410</id>
        <label>KRTAP10-8</label>
    </interactant>
    <organismsDiffer>false</organismsDiffer>
    <experiments>3</experiments>
</comment>
<comment type="interaction">
    <interactant intactId="EBI-739851">
        <id>Q15274</id>
    </interactant>
    <interactant intactId="EBI-16423037">
        <id>Q9NZ94-2</id>
        <label>NLGN3</label>
    </interactant>
    <organismsDiffer>false</organismsDiffer>
    <experiments>4</experiments>
</comment>
<comment type="interaction">
    <interactant intactId="EBI-739851">
        <id>Q15274</id>
    </interactant>
    <interactant intactId="EBI-739851">
        <id>Q15274</id>
        <label>QPRT</label>
    </interactant>
    <organismsDiffer>false</organismsDiffer>
    <experiments>3</experiments>
</comment>
<comment type="similarity">
    <text evidence="7">Belongs to the NadC/ModD family.</text>
</comment>
<gene>
    <name type="primary">QPRT</name>
</gene>
<reference key="1">
    <citation type="journal article" date="1998" name="Biochim. Biophys. Acta">
        <title>Characterization and functional expression of the cDNA encoding human brain quinolinate phosphoribosyltransferase.</title>
        <authorList>
            <person name="Fukuoka S."/>
            <person name="Nyaruhucha C.M."/>
            <person name="Shibata K."/>
        </authorList>
    </citation>
    <scope>NUCLEOTIDE SEQUENCE [MRNA]</scope>
    <scope>FUNCTION</scope>
    <scope>CATALYTIC ACTIVITY</scope>
    <scope>PATHWAY</scope>
    <scope>VARIANT ALA-195</scope>
    <source>
        <tissue>Brain</tissue>
    </source>
</reference>
<reference key="2">
    <citation type="submission" date="2003-05" db="EMBL/GenBank/DDBJ databases">
        <title>Cloning of human full-length CDSs in BD Creator(TM) system donor vector.</title>
        <authorList>
            <person name="Kalnine N."/>
            <person name="Chen X."/>
            <person name="Rolfs A."/>
            <person name="Halleck A."/>
            <person name="Hines L."/>
            <person name="Eisenstein S."/>
            <person name="Koundinya M."/>
            <person name="Raphael J."/>
            <person name="Moreira D."/>
            <person name="Kelley T."/>
            <person name="LaBaer J."/>
            <person name="Lin Y."/>
            <person name="Phelan M."/>
            <person name="Farmer A."/>
        </authorList>
    </citation>
    <scope>NUCLEOTIDE SEQUENCE [LARGE SCALE MRNA]</scope>
    <scope>VARIANT ALA-195</scope>
</reference>
<reference key="3">
    <citation type="journal article" date="2004" name="Genome Res.">
        <title>The status, quality, and expansion of the NIH full-length cDNA project: the Mammalian Gene Collection (MGC).</title>
        <authorList>
            <consortium name="The MGC Project Team"/>
        </authorList>
    </citation>
    <scope>NUCLEOTIDE SEQUENCE [LARGE SCALE MRNA]</scope>
    <scope>VARIANT ALA-195</scope>
    <source>
        <tissue>Kidney</tissue>
        <tissue>Muscle</tissue>
        <tissue>Placenta</tissue>
    </source>
</reference>
<reference key="4">
    <citation type="journal article" date="2014" name="J. Proteomics">
        <title>An enzyme assisted RP-RPLC approach for in-depth analysis of human liver phosphoproteome.</title>
        <authorList>
            <person name="Bian Y."/>
            <person name="Song C."/>
            <person name="Cheng K."/>
            <person name="Dong M."/>
            <person name="Wang F."/>
            <person name="Huang J."/>
            <person name="Sun D."/>
            <person name="Wang L."/>
            <person name="Ye M."/>
            <person name="Zou H."/>
        </authorList>
    </citation>
    <scope>IDENTIFICATION BY MASS SPECTROMETRY [LARGE SCALE ANALYSIS]</scope>
    <source>
        <tissue>Liver</tissue>
    </source>
</reference>
<reference key="5">
    <citation type="journal article" date="2007" name="J. Mol. Biol.">
        <title>Structural and kinetic characterization of quinolinate phosphoribosyltransferase (hQPRTase) from homo sapiens.</title>
        <authorList>
            <person name="Liu H."/>
            <person name="Woznica K."/>
            <person name="Catton G."/>
            <person name="Crawford A."/>
            <person name="Botting N."/>
            <person name="Naismith J.H."/>
        </authorList>
    </citation>
    <scope>X-RAY CRYSTALLOGRAPHY (2.00 ANGSTROMS) IN COMPLEX WITH SUBSTRATE ANALOG</scope>
    <scope>MUTAGENESIS OF ARG-102; ARG-138; LYS-139; ARG-161 AND LYS-171</scope>
    <scope>FUNCTION</scope>
    <scope>CATALYTIC ACTIVITY</scope>
    <scope>ACTIVITY REGULATION</scope>
    <scope>BIOPHYSICOCHEMICAL PROPERTIES</scope>
    <scope>PATHWAY</scope>
    <scope>SUBUNIT</scope>
</reference>
<reference evidence="11 12" key="6">
    <citation type="journal article" date="2014" name="Proteins">
        <title>The crystal structure of human quinolinic acid phosphoribosyltransferase in complex with its inhibitor phthalic acid.</title>
        <authorList>
            <person name="Malik S.S."/>
            <person name="Patterson D.N."/>
            <person name="Ncube Z."/>
            <person name="Toth E.A."/>
        </authorList>
    </citation>
    <scope>X-RAY CRYSTALLOGRAPHY (2.55 ANGSTROMS) IN APO FORM AND IN COMPLEX WITH INHIBITOR PHT</scope>
    <scope>FUNCTION</scope>
    <scope>CATALYTIC ACTIVITY</scope>
    <scope>ACTIVITY REGULATION</scope>
    <scope>PATHWAY</scope>
    <scope>SUBUNIT</scope>
</reference>
<reference evidence="13 14 15" key="7">
    <citation type="journal article" date="2016" name="Sci. Rep.">
        <title>Structural Insights into the Quaternary Catalytic Mechanism of Hexameric Human Quinolinate Phosphoribosyltransferase, a Key Enzyme in de novo NAD Biosynthesis.</title>
        <authorList>
            <person name="Youn H.S."/>
            <person name="Kim T.G."/>
            <person name="Kim M.K."/>
            <person name="Kang G.B."/>
            <person name="Kang J.Y."/>
            <person name="Lee J.G."/>
            <person name="An J.Y."/>
            <person name="Park K.R."/>
            <person name="Lee Y."/>
            <person name="Im Y.J."/>
            <person name="Lee J.H."/>
            <person name="Eom S.H."/>
        </authorList>
    </citation>
    <scope>X-RAY CRYSTALLOGRAPHY (2.60 ANGSTROMS) IN APO FORM; IN COMPLEX WITH QUINOLINATE AND IN COMPLEX WITH NICOTINATE MONONUCLEOTIDE</scope>
    <scope>SUBUNIT</scope>
    <scope>MUTAGENESIS OF 1-MET--GLU-4; 1-MET--LEU-8; 1-MET--LEU-9; 1-MET--LEU-10 AND 1-MET--PRO-12</scope>
</reference>
<reference key="8">
    <citation type="journal article" date="2011" name="BMC Syst. Biol.">
        <title>Initial characterization of the human central proteome.</title>
        <authorList>
            <person name="Burkard T.R."/>
            <person name="Planyavsky M."/>
            <person name="Kaupe I."/>
            <person name="Breitwieser F.P."/>
            <person name="Buerckstuemmer T."/>
            <person name="Bennett K.L."/>
            <person name="Superti-Furga G."/>
            <person name="Colinge J."/>
        </authorList>
    </citation>
    <scope>VARIANT [LARGE SCALE ANALYSIS] ALA-195</scope>
    <scope>IDENTIFICATION BY MASS SPECTROMETRY [LARGE SCALE ANALYSIS]</scope>
</reference>
<dbReference type="EC" id="2.4.2.19" evidence="2 3 5"/>
<dbReference type="EMBL" id="D78177">
    <property type="protein sequence ID" value="BAA11242.1"/>
    <property type="molecule type" value="mRNA"/>
</dbReference>
<dbReference type="EMBL" id="BT007231">
    <property type="protein sequence ID" value="AAP35895.1"/>
    <property type="molecule type" value="mRNA"/>
</dbReference>
<dbReference type="EMBL" id="BC005060">
    <property type="protein sequence ID" value="AAH05060.1"/>
    <property type="molecule type" value="mRNA"/>
</dbReference>
<dbReference type="EMBL" id="BC010033">
    <property type="protein sequence ID" value="AAH10033.1"/>
    <property type="molecule type" value="mRNA"/>
</dbReference>
<dbReference type="EMBL" id="BC018910">
    <property type="protein sequence ID" value="AAH18910.1"/>
    <property type="molecule type" value="mRNA"/>
</dbReference>
<dbReference type="CCDS" id="CCDS10651.1"/>
<dbReference type="PIR" id="T46864">
    <property type="entry name" value="T46864"/>
</dbReference>
<dbReference type="RefSeq" id="NP_001305178.1">
    <property type="nucleotide sequence ID" value="NM_001318249.1"/>
</dbReference>
<dbReference type="RefSeq" id="NP_001305179.1">
    <property type="nucleotide sequence ID" value="NM_001318250.1"/>
</dbReference>
<dbReference type="RefSeq" id="NP_055113.2">
    <property type="nucleotide sequence ID" value="NM_014298.4"/>
</dbReference>
<dbReference type="PDB" id="2JBM">
    <property type="method" value="X-ray"/>
    <property type="resolution" value="2.00 A"/>
    <property type="chains" value="A/B/C/D/E/F/G/H/I/J/K/L=1-297"/>
</dbReference>
<dbReference type="PDB" id="4KWV">
    <property type="method" value="X-ray"/>
    <property type="resolution" value="2.80 A"/>
    <property type="chains" value="A/B/C/D/E/F=1-297"/>
</dbReference>
<dbReference type="PDB" id="4KWW">
    <property type="method" value="X-ray"/>
    <property type="resolution" value="2.55 A"/>
    <property type="chains" value="A/B/C/D/E/F=1-297"/>
</dbReference>
<dbReference type="PDB" id="5AYX">
    <property type="method" value="X-ray"/>
    <property type="resolution" value="2.80 A"/>
    <property type="chains" value="A/B/C/D/E/F=1-297"/>
</dbReference>
<dbReference type="PDB" id="5AYY">
    <property type="method" value="X-ray"/>
    <property type="resolution" value="3.09 A"/>
    <property type="chains" value="A/B/C/D/E/F/G/H/I=1-297"/>
</dbReference>
<dbReference type="PDB" id="5AYZ">
    <property type="method" value="X-ray"/>
    <property type="resolution" value="2.60 A"/>
    <property type="chains" value="A/B/C/D/E/F/G/H/I/J/K/L=1-297"/>
</dbReference>
<dbReference type="PDBsum" id="2JBM"/>
<dbReference type="PDBsum" id="4KWV"/>
<dbReference type="PDBsum" id="4KWW"/>
<dbReference type="PDBsum" id="5AYX"/>
<dbReference type="PDBsum" id="5AYY"/>
<dbReference type="PDBsum" id="5AYZ"/>
<dbReference type="SMR" id="Q15274"/>
<dbReference type="BioGRID" id="117035">
    <property type="interactions" value="87"/>
</dbReference>
<dbReference type="FunCoup" id="Q15274">
    <property type="interactions" value="341"/>
</dbReference>
<dbReference type="IntAct" id="Q15274">
    <property type="interactions" value="60"/>
</dbReference>
<dbReference type="STRING" id="9606.ENSP00000378782"/>
<dbReference type="DrugBank" id="DB00627">
    <property type="generic name" value="Niacin"/>
</dbReference>
<dbReference type="DrugCentral" id="Q15274"/>
<dbReference type="iPTMnet" id="Q15274"/>
<dbReference type="PhosphoSitePlus" id="Q15274"/>
<dbReference type="BioMuta" id="QPRT"/>
<dbReference type="DMDM" id="296439291"/>
<dbReference type="jPOST" id="Q15274"/>
<dbReference type="MassIVE" id="Q15274"/>
<dbReference type="PaxDb" id="9606-ENSP00000378782"/>
<dbReference type="PeptideAtlas" id="Q15274"/>
<dbReference type="ProteomicsDB" id="60508"/>
<dbReference type="Pumba" id="Q15274"/>
<dbReference type="Antibodypedia" id="26777">
    <property type="antibodies" value="341 antibodies from 26 providers"/>
</dbReference>
<dbReference type="DNASU" id="23475"/>
<dbReference type="Ensembl" id="ENST00000395384.9">
    <property type="protein sequence ID" value="ENSP00000378782.4"/>
    <property type="gene ID" value="ENSG00000103485.19"/>
</dbReference>
<dbReference type="Ensembl" id="ENST00000449759.2">
    <property type="protein sequence ID" value="ENSP00000404873.3"/>
    <property type="gene ID" value="ENSG00000103485.19"/>
</dbReference>
<dbReference type="GeneID" id="23475"/>
<dbReference type="KEGG" id="hsa:23475"/>
<dbReference type="MANE-Select" id="ENST00000395384.9">
    <property type="protein sequence ID" value="ENSP00000378782.4"/>
    <property type="RefSeq nucleotide sequence ID" value="NM_014298.6"/>
    <property type="RefSeq protein sequence ID" value="NP_055113.3"/>
</dbReference>
<dbReference type="UCSC" id="uc002dto.4">
    <property type="organism name" value="human"/>
</dbReference>
<dbReference type="AGR" id="HGNC:9755"/>
<dbReference type="CTD" id="23475"/>
<dbReference type="DisGeNET" id="23475"/>
<dbReference type="GeneCards" id="QPRT"/>
<dbReference type="HGNC" id="HGNC:9755">
    <property type="gene designation" value="QPRT"/>
</dbReference>
<dbReference type="HPA" id="ENSG00000103485">
    <property type="expression patterns" value="Tissue enhanced (kidney, liver)"/>
</dbReference>
<dbReference type="MIM" id="606248">
    <property type="type" value="gene"/>
</dbReference>
<dbReference type="neXtProt" id="NX_Q15274"/>
<dbReference type="OpenTargets" id="ENSG00000103485"/>
<dbReference type="PharmGKB" id="PA34096"/>
<dbReference type="VEuPathDB" id="HostDB:ENSG00000103485"/>
<dbReference type="eggNOG" id="KOG3008">
    <property type="taxonomic scope" value="Eukaryota"/>
</dbReference>
<dbReference type="GeneTree" id="ENSGT00390000002761"/>
<dbReference type="HOGENOM" id="CLU_039622_1_1_1"/>
<dbReference type="InParanoid" id="Q15274"/>
<dbReference type="OMA" id="DIVMCDN"/>
<dbReference type="OrthoDB" id="10067394at2759"/>
<dbReference type="PAN-GO" id="Q15274">
    <property type="GO annotations" value="4 GO annotations based on evolutionary models"/>
</dbReference>
<dbReference type="PhylomeDB" id="Q15274"/>
<dbReference type="TreeFam" id="TF300845"/>
<dbReference type="BioCyc" id="MetaCyc:HS02508-MONOMER"/>
<dbReference type="BRENDA" id="2.4.2.19">
    <property type="organism ID" value="2681"/>
</dbReference>
<dbReference type="PathwayCommons" id="Q15274"/>
<dbReference type="Reactome" id="R-HSA-196807">
    <property type="pathway name" value="Nicotinate metabolism"/>
</dbReference>
<dbReference type="SignaLink" id="Q15274"/>
<dbReference type="UniPathway" id="UPA00253">
    <property type="reaction ID" value="UER00331"/>
</dbReference>
<dbReference type="BioGRID-ORCS" id="23475">
    <property type="hits" value="10 hits in 1158 CRISPR screens"/>
</dbReference>
<dbReference type="CD-CODE" id="DEE660B4">
    <property type="entry name" value="Stress granule"/>
</dbReference>
<dbReference type="ChiTaRS" id="QPRT">
    <property type="organism name" value="human"/>
</dbReference>
<dbReference type="EvolutionaryTrace" id="Q15274"/>
<dbReference type="GenomeRNAi" id="23475"/>
<dbReference type="Pharos" id="Q15274">
    <property type="development level" value="Tbio"/>
</dbReference>
<dbReference type="PRO" id="PR:Q15274"/>
<dbReference type="Proteomes" id="UP000005640">
    <property type="component" value="Chromosome 16"/>
</dbReference>
<dbReference type="RNAct" id="Q15274">
    <property type="molecule type" value="protein"/>
</dbReference>
<dbReference type="Bgee" id="ENSG00000103485">
    <property type="expression patterns" value="Expressed in right adrenal gland cortex and 166 other cell types or tissues"/>
</dbReference>
<dbReference type="ExpressionAtlas" id="Q15274">
    <property type="expression patterns" value="baseline and differential"/>
</dbReference>
<dbReference type="GO" id="GO:1902494">
    <property type="term" value="C:catalytic complex"/>
    <property type="evidence" value="ECO:0000314"/>
    <property type="project" value="UniProtKB"/>
</dbReference>
<dbReference type="GO" id="GO:0005737">
    <property type="term" value="C:cytoplasm"/>
    <property type="evidence" value="ECO:0000318"/>
    <property type="project" value="GO_Central"/>
</dbReference>
<dbReference type="GO" id="GO:0005829">
    <property type="term" value="C:cytosol"/>
    <property type="evidence" value="ECO:0000304"/>
    <property type="project" value="Reactome"/>
</dbReference>
<dbReference type="GO" id="GO:0070062">
    <property type="term" value="C:extracellular exosome"/>
    <property type="evidence" value="ECO:0007005"/>
    <property type="project" value="UniProtKB"/>
</dbReference>
<dbReference type="GO" id="GO:0042802">
    <property type="term" value="F:identical protein binding"/>
    <property type="evidence" value="ECO:0000353"/>
    <property type="project" value="UniProtKB"/>
</dbReference>
<dbReference type="GO" id="GO:0004514">
    <property type="term" value="F:nicotinate-nucleotide diphosphorylase (carboxylating) activity"/>
    <property type="evidence" value="ECO:0000314"/>
    <property type="project" value="UniProtKB"/>
</dbReference>
<dbReference type="GO" id="GO:0009435">
    <property type="term" value="P:NAD biosynthetic process"/>
    <property type="evidence" value="ECO:0000318"/>
    <property type="project" value="GO_Central"/>
</dbReference>
<dbReference type="GO" id="GO:0019674">
    <property type="term" value="P:NAD metabolic process"/>
    <property type="evidence" value="ECO:0000304"/>
    <property type="project" value="Reactome"/>
</dbReference>
<dbReference type="GO" id="GO:0034213">
    <property type="term" value="P:quinolinate catabolic process"/>
    <property type="evidence" value="ECO:0000314"/>
    <property type="project" value="UniProtKB"/>
</dbReference>
<dbReference type="CDD" id="cd01572">
    <property type="entry name" value="QPRTase"/>
    <property type="match status" value="1"/>
</dbReference>
<dbReference type="FunFam" id="3.20.20.70:FF:000090">
    <property type="entry name" value="Nicotinate-nucleotide pyrophosphorylase [carboxylating]"/>
    <property type="match status" value="1"/>
</dbReference>
<dbReference type="FunFam" id="3.90.1170.20:FF:000004">
    <property type="entry name" value="Nicotinate-nucleotide pyrophosphorylase [carboxylating]"/>
    <property type="match status" value="1"/>
</dbReference>
<dbReference type="Gene3D" id="3.20.20.70">
    <property type="entry name" value="Aldolase class I"/>
    <property type="match status" value="1"/>
</dbReference>
<dbReference type="Gene3D" id="3.90.1170.20">
    <property type="entry name" value="Quinolinate phosphoribosyl transferase, N-terminal domain"/>
    <property type="match status" value="1"/>
</dbReference>
<dbReference type="InterPro" id="IPR013785">
    <property type="entry name" value="Aldolase_TIM"/>
</dbReference>
<dbReference type="InterPro" id="IPR004393">
    <property type="entry name" value="NadC"/>
</dbReference>
<dbReference type="InterPro" id="IPR027277">
    <property type="entry name" value="NadC/ModD"/>
</dbReference>
<dbReference type="InterPro" id="IPR036068">
    <property type="entry name" value="Nicotinate_pribotase-like_C"/>
</dbReference>
<dbReference type="InterPro" id="IPR037128">
    <property type="entry name" value="Quinolinate_PRibosylTase_N_sf"/>
</dbReference>
<dbReference type="InterPro" id="IPR002638">
    <property type="entry name" value="Quinolinate_PRibosylTrfase_C"/>
</dbReference>
<dbReference type="InterPro" id="IPR022412">
    <property type="entry name" value="Quinolinate_PRibosylTrfase_N"/>
</dbReference>
<dbReference type="NCBIfam" id="TIGR00078">
    <property type="entry name" value="nadC"/>
    <property type="match status" value="1"/>
</dbReference>
<dbReference type="PANTHER" id="PTHR32179">
    <property type="entry name" value="NICOTINATE-NUCLEOTIDE PYROPHOSPHORYLASE [CARBOXYLATING]"/>
    <property type="match status" value="1"/>
</dbReference>
<dbReference type="PANTHER" id="PTHR32179:SF3">
    <property type="entry name" value="NICOTINATE-NUCLEOTIDE PYROPHOSPHORYLASE [CARBOXYLATING]"/>
    <property type="match status" value="1"/>
</dbReference>
<dbReference type="Pfam" id="PF01729">
    <property type="entry name" value="QRPTase_C"/>
    <property type="match status" value="1"/>
</dbReference>
<dbReference type="Pfam" id="PF02749">
    <property type="entry name" value="QRPTase_N"/>
    <property type="match status" value="1"/>
</dbReference>
<dbReference type="PIRSF" id="PIRSF006250">
    <property type="entry name" value="NadC_ModD"/>
    <property type="match status" value="1"/>
</dbReference>
<dbReference type="SUPFAM" id="SSF51690">
    <property type="entry name" value="Nicotinate/Quinolinate PRTase C-terminal domain-like"/>
    <property type="match status" value="1"/>
</dbReference>
<dbReference type="SUPFAM" id="SSF54675">
    <property type="entry name" value="Nicotinate/Quinolinate PRTase N-terminal domain-like"/>
    <property type="match status" value="1"/>
</dbReference>
<evidence type="ECO:0000269" key="1">
    <source>
    </source>
</evidence>
<evidence type="ECO:0000269" key="2">
    <source>
    </source>
</evidence>
<evidence type="ECO:0000269" key="3">
    <source>
    </source>
</evidence>
<evidence type="ECO:0000269" key="4">
    <source>
    </source>
</evidence>
<evidence type="ECO:0000269" key="5">
    <source>
    </source>
</evidence>
<evidence type="ECO:0000269" key="6">
    <source ref="2"/>
</evidence>
<evidence type="ECO:0000305" key="7"/>
<evidence type="ECO:0000305" key="8">
    <source>
    </source>
</evidence>
<evidence type="ECO:0000305" key="9">
    <source>
    </source>
</evidence>
<evidence type="ECO:0007744" key="10">
    <source>
        <dbReference type="PDB" id="2JBM"/>
    </source>
</evidence>
<evidence type="ECO:0007744" key="11">
    <source>
        <dbReference type="PDB" id="4KWV"/>
    </source>
</evidence>
<evidence type="ECO:0007744" key="12">
    <source>
        <dbReference type="PDB" id="4KWW"/>
    </source>
</evidence>
<evidence type="ECO:0007744" key="13">
    <source>
        <dbReference type="PDB" id="5AYX"/>
    </source>
</evidence>
<evidence type="ECO:0007744" key="14">
    <source>
        <dbReference type="PDB" id="5AYY"/>
    </source>
</evidence>
<evidence type="ECO:0007744" key="15">
    <source>
        <dbReference type="PDB" id="5AYZ"/>
    </source>
</evidence>
<evidence type="ECO:0007744" key="16">
    <source>
    </source>
</evidence>
<evidence type="ECO:0007829" key="17">
    <source>
        <dbReference type="PDB" id="2JBM"/>
    </source>
</evidence>
<evidence type="ECO:0007829" key="18">
    <source>
        <dbReference type="PDB" id="5AYX"/>
    </source>
</evidence>
<proteinExistence type="evidence at protein level"/>
<feature type="chain" id="PRO_0000155954" description="Nicotinate-nucleotide pyrophosphorylase [carboxylating]">
    <location>
        <begin position="1"/>
        <end position="297"/>
    </location>
</feature>
<feature type="region of interest" description="Important for hexamer formation" evidence="4">
    <location>
        <begin position="8"/>
        <end position="12"/>
    </location>
</feature>
<feature type="binding site" evidence="4 8 9 10 12 14">
    <location>
        <position position="102"/>
    </location>
    <ligand>
        <name>quinolinate</name>
        <dbReference type="ChEBI" id="CHEBI:29959"/>
    </ligand>
</feature>
<feature type="binding site" evidence="4 8 9 10 12 14 15">
    <location>
        <begin position="138"/>
        <end position="139"/>
    </location>
    <ligand>
        <name>quinolinate</name>
        <dbReference type="ChEBI" id="CHEBI:29959"/>
    </ligand>
</feature>
<feature type="binding site" evidence="4 8 9 10 12 14 15">
    <location>
        <begin position="160"/>
        <end position="161"/>
    </location>
    <ligand>
        <name>quinolinate</name>
        <dbReference type="ChEBI" id="CHEBI:29959"/>
    </ligand>
</feature>
<feature type="binding site" evidence="4 9 10 12 14 15">
    <location>
        <position position="171"/>
    </location>
    <ligand>
        <name>quinolinate</name>
        <dbReference type="ChEBI" id="CHEBI:29959"/>
    </ligand>
</feature>
<feature type="binding site" evidence="4 15">
    <location>
        <position position="201"/>
    </location>
    <ligand>
        <name>quinolinate</name>
        <dbReference type="ChEBI" id="CHEBI:29959"/>
    </ligand>
</feature>
<feature type="binding site" evidence="4 15">
    <location>
        <position position="222"/>
    </location>
    <ligand>
        <name>quinolinate</name>
        <dbReference type="ChEBI" id="CHEBI:29959"/>
    </ligand>
</feature>
<feature type="binding site" evidence="4 15">
    <location>
        <begin position="248"/>
        <end position="250"/>
    </location>
    <ligand>
        <name>quinolinate</name>
        <dbReference type="ChEBI" id="CHEBI:29959"/>
    </ligand>
</feature>
<feature type="binding site" evidence="4 15">
    <location>
        <position position="270"/>
    </location>
    <ligand>
        <name>quinolinate</name>
        <dbReference type="ChEBI" id="CHEBI:29959"/>
    </ligand>
</feature>
<feature type="sequence variant" id="VAR_021915" description="In dbSNP:rs2303255.">
    <original>A</original>
    <variation>V</variation>
    <location>
        <position position="158"/>
    </location>
</feature>
<feature type="sequence variant" id="VAR_050219" description="In dbSNP:rs9932770." evidence="1 5 6 16">
    <original>T</original>
    <variation>A</variation>
    <location>
        <position position="195"/>
    </location>
</feature>
<feature type="mutagenesis site" description="Forms dimers instead of hexamers." evidence="4">
    <location>
        <begin position="1"/>
        <end position="12"/>
    </location>
</feature>
<feature type="mutagenesis site" description="Forms dimers instead of hexamers." evidence="4">
    <location>
        <begin position="1"/>
        <end position="10"/>
    </location>
</feature>
<feature type="mutagenesis site" description="Forms dimers instead of hexamers." evidence="4">
    <location>
        <begin position="1"/>
        <end position="9"/>
    </location>
</feature>
<feature type="mutagenesis site" description="Forms dimers instead of hexamers." evidence="4">
    <location>
        <begin position="1"/>
        <end position="8"/>
    </location>
</feature>
<feature type="mutagenesis site" description="No effect on hexamer formation." evidence="4">
    <location>
        <begin position="1"/>
        <end position="4"/>
    </location>
</feature>
<feature type="mutagenesis site" description="Reduced activity." evidence="2">
    <original>R</original>
    <variation>A</variation>
    <variation>Q</variation>
    <location>
        <position position="102"/>
    </location>
</feature>
<feature type="mutagenesis site" description="Loss of activity." evidence="2">
    <original>R</original>
    <variation>Q</variation>
    <location>
        <position position="138"/>
    </location>
</feature>
<feature type="mutagenesis site" description="Loss of activity." evidence="2">
    <original>K</original>
    <variation>A</variation>
    <variation>S</variation>
    <location>
        <position position="139"/>
    </location>
</feature>
<feature type="mutagenesis site" description="Reduced activity." evidence="2">
    <original>R</original>
    <variation>A</variation>
    <location>
        <position position="161"/>
    </location>
</feature>
<feature type="mutagenesis site" description="Loss of activity." evidence="2">
    <original>R</original>
    <variation>Q</variation>
    <location>
        <position position="161"/>
    </location>
</feature>
<feature type="mutagenesis site" description="Loss of activity." evidence="2">
    <original>K</original>
    <variation>A</variation>
    <variation>S</variation>
    <location>
        <position position="171"/>
    </location>
</feature>
<feature type="sequence conflict" description="In Ref. 2; AAP35895 and 3; AAH05060." evidence="7" ref="2 3">
    <original>V</original>
    <variation>I</variation>
    <location>
        <position position="53"/>
    </location>
</feature>
<feature type="sequence conflict" description="In Ref. 1; BAA11242." evidence="7" ref="1">
    <original>V</original>
    <variation>L</variation>
    <location>
        <position position="170"/>
    </location>
</feature>
<feature type="sequence conflict" description="In Ref. 1; BAA11242." evidence="7" ref="1">
    <original>AA</original>
    <variation>PP</variation>
    <location>
        <begin position="177"/>
        <end position="178"/>
    </location>
</feature>
<feature type="sequence conflict" description="In Ref. 1; BAA11242." evidence="7" ref="1">
    <original>A</original>
    <variation>V</variation>
    <location>
        <position position="208"/>
    </location>
</feature>
<feature type="sequence conflict" description="In Ref. 1; BAA11242." evidence="7" ref="1">
    <original>V</original>
    <variation>A</variation>
    <location>
        <position position="235"/>
    </location>
</feature>
<feature type="sequence conflict" description="In Ref. 1; BAA11242." evidence="7" ref="1">
    <original>A</original>
    <variation>V</variation>
    <location>
        <position position="276"/>
    </location>
</feature>
<feature type="helix" evidence="17">
    <location>
        <begin position="3"/>
        <end position="9"/>
    </location>
</feature>
<feature type="helix" evidence="17">
    <location>
        <begin position="12"/>
        <end position="26"/>
    </location>
</feature>
<feature type="helix" evidence="17">
    <location>
        <begin position="34"/>
        <end position="37"/>
    </location>
</feature>
<feature type="strand" evidence="17">
    <location>
        <begin position="41"/>
        <end position="48"/>
    </location>
</feature>
<feature type="strand" evidence="18">
    <location>
        <begin position="50"/>
        <end position="53"/>
    </location>
</feature>
<feature type="helix" evidence="17">
    <location>
        <begin position="57"/>
        <end position="66"/>
    </location>
</feature>
<feature type="strand" evidence="17">
    <location>
        <begin position="70"/>
        <end position="75"/>
    </location>
</feature>
<feature type="strand" evidence="17">
    <location>
        <begin position="83"/>
        <end position="93"/>
    </location>
</feature>
<feature type="helix" evidence="17">
    <location>
        <begin position="94"/>
        <end position="127"/>
    </location>
</feature>
<feature type="strand" evidence="17">
    <location>
        <begin position="132"/>
        <end position="135"/>
    </location>
</feature>
<feature type="helix" evidence="17">
    <location>
        <begin position="145"/>
        <end position="154"/>
    </location>
</feature>
<feature type="turn" evidence="18">
    <location>
        <begin position="161"/>
        <end position="163"/>
    </location>
</feature>
<feature type="strand" evidence="17">
    <location>
        <begin position="166"/>
        <end position="170"/>
    </location>
</feature>
<feature type="helix" evidence="17">
    <location>
        <begin position="172"/>
        <end position="178"/>
    </location>
</feature>
<feature type="helix" evidence="17">
    <location>
        <begin position="181"/>
        <end position="192"/>
    </location>
</feature>
<feature type="turn" evidence="17">
    <location>
        <begin position="193"/>
        <end position="195"/>
    </location>
</feature>
<feature type="strand" evidence="17">
    <location>
        <begin position="198"/>
        <end position="204"/>
    </location>
</feature>
<feature type="helix" evidence="17">
    <location>
        <begin position="205"/>
        <end position="213"/>
    </location>
</feature>
<feature type="strand" evidence="17">
    <location>
        <begin position="217"/>
        <end position="223"/>
    </location>
</feature>
<feature type="helix" evidence="17">
    <location>
        <begin position="226"/>
        <end position="239"/>
    </location>
</feature>
<feature type="strand" evidence="17">
    <location>
        <begin position="243"/>
        <end position="250"/>
    </location>
</feature>
<feature type="turn" evidence="17">
    <location>
        <begin position="253"/>
        <end position="255"/>
    </location>
</feature>
<feature type="helix" evidence="17">
    <location>
        <begin position="256"/>
        <end position="259"/>
    </location>
</feature>
<feature type="strand" evidence="17">
    <location>
        <begin position="266"/>
        <end position="268"/>
    </location>
</feature>
<feature type="helix" evidence="17">
    <location>
        <begin position="271"/>
        <end position="274"/>
    </location>
</feature>
<feature type="strand" evidence="17">
    <location>
        <begin position="281"/>
        <end position="288"/>
    </location>
</feature>
<protein>
    <recommendedName>
        <fullName>Nicotinate-nucleotide pyrophosphorylase [carboxylating]</fullName>
        <ecNumber evidence="2 3 5">2.4.2.19</ecNumber>
    </recommendedName>
    <alternativeName>
        <fullName>Quinolinate phosphoribosyltransferase [decarboxylating]</fullName>
        <shortName>QAPRTase</shortName>
        <shortName>QPRTase</shortName>
    </alternativeName>
</protein>
<sequence>MDAEGLALLLPPVTLAALVDSWLREDCPGLNYAALVSGAGPSQAALWAKSPGVLAGQPFFDAIFTQLNCQVSWFLPEGSKLVPVARVAEVRGPAHCLLLGERVALNTLARCSGIASAAAAAVEAARGAGWTGHVAGTRKTTPGFRLVEKYGLLVGGAASHRYDLGGLVMVKDNHVVAAGGVEKAVRAARQAADFTLKVEVECSSLQEAVQAAEAGADLVLLDNFKPEELHPTATVLKAQFPSVAVEASGGITLDNLPQFCGPHIDVISMGMLTQAAPALDFSLKLFAKEVAPVPKIH</sequence>
<name>NADC_HUMAN</name>